<reference key="1">
    <citation type="journal article" date="2005" name="Science">
        <title>Genome streamlining in a cosmopolitan oceanic bacterium.</title>
        <authorList>
            <person name="Giovannoni S.J."/>
            <person name="Tripp H.J."/>
            <person name="Givan S."/>
            <person name="Podar M."/>
            <person name="Vergin K.L."/>
            <person name="Baptista D."/>
            <person name="Bibbs L."/>
            <person name="Eads J."/>
            <person name="Richardson T.H."/>
            <person name="Noordewier M."/>
            <person name="Rappe M.S."/>
            <person name="Short J.M."/>
            <person name="Carrington J.C."/>
            <person name="Mathur E.J."/>
        </authorList>
    </citation>
    <scope>NUCLEOTIDE SEQUENCE [LARGE SCALE GENOMIC DNA]</scope>
    <source>
        <strain>HTCC1062</strain>
    </source>
</reference>
<protein>
    <recommendedName>
        <fullName evidence="1">Small ribosomal subunit protein bS6</fullName>
    </recommendedName>
    <alternativeName>
        <fullName evidence="2">30S ribosomal protein S6</fullName>
    </alternativeName>
</protein>
<gene>
    <name evidence="1" type="primary">rpsF</name>
    <name type="ordered locus">SAR11_0705</name>
</gene>
<keyword id="KW-1185">Reference proteome</keyword>
<keyword id="KW-0687">Ribonucleoprotein</keyword>
<keyword id="KW-0689">Ribosomal protein</keyword>
<keyword id="KW-0694">RNA-binding</keyword>
<keyword id="KW-0699">rRNA-binding</keyword>
<evidence type="ECO:0000255" key="1">
    <source>
        <dbReference type="HAMAP-Rule" id="MF_00360"/>
    </source>
</evidence>
<evidence type="ECO:0000305" key="2"/>
<accession>Q4FMR5</accession>
<sequence>MNLYEHTIVARQDTSPAQVKQLTEKYSKIVEKNEGEIVQTEDWGLLNLAYIIKKNKKGIYMHFKIKGPGKIIDELEKNEAIDKNLLRYMTVKVKKFNLEAKYFSKKDEYEKKEYKKEYNRD</sequence>
<name>RS6_PELUB</name>
<organism>
    <name type="scientific">Pelagibacter ubique (strain HTCC1062)</name>
    <dbReference type="NCBI Taxonomy" id="335992"/>
    <lineage>
        <taxon>Bacteria</taxon>
        <taxon>Pseudomonadati</taxon>
        <taxon>Pseudomonadota</taxon>
        <taxon>Alphaproteobacteria</taxon>
        <taxon>Candidatus Pelagibacterales</taxon>
        <taxon>Candidatus Pelagibacteraceae</taxon>
        <taxon>Candidatus Pelagibacter</taxon>
    </lineage>
</organism>
<proteinExistence type="inferred from homology"/>
<feature type="chain" id="PRO_0000229559" description="Small ribosomal subunit protein bS6">
    <location>
        <begin position="1"/>
        <end position="121"/>
    </location>
</feature>
<dbReference type="EMBL" id="CP000084">
    <property type="protein sequence ID" value="AAZ21524.1"/>
    <property type="molecule type" value="Genomic_DNA"/>
</dbReference>
<dbReference type="RefSeq" id="WP_006997208.1">
    <property type="nucleotide sequence ID" value="NC_007205.1"/>
</dbReference>
<dbReference type="SMR" id="Q4FMR5"/>
<dbReference type="STRING" id="335992.SAR11_0705"/>
<dbReference type="GeneID" id="66295208"/>
<dbReference type="KEGG" id="pub:SAR11_0705"/>
<dbReference type="eggNOG" id="COG0360">
    <property type="taxonomic scope" value="Bacteria"/>
</dbReference>
<dbReference type="HOGENOM" id="CLU_113441_2_0_5"/>
<dbReference type="OrthoDB" id="9812702at2"/>
<dbReference type="Proteomes" id="UP000002528">
    <property type="component" value="Chromosome"/>
</dbReference>
<dbReference type="GO" id="GO:0022627">
    <property type="term" value="C:cytosolic small ribosomal subunit"/>
    <property type="evidence" value="ECO:0007669"/>
    <property type="project" value="TreeGrafter"/>
</dbReference>
<dbReference type="GO" id="GO:0070181">
    <property type="term" value="F:small ribosomal subunit rRNA binding"/>
    <property type="evidence" value="ECO:0007669"/>
    <property type="project" value="TreeGrafter"/>
</dbReference>
<dbReference type="GO" id="GO:0003735">
    <property type="term" value="F:structural constituent of ribosome"/>
    <property type="evidence" value="ECO:0007669"/>
    <property type="project" value="InterPro"/>
</dbReference>
<dbReference type="GO" id="GO:0006412">
    <property type="term" value="P:translation"/>
    <property type="evidence" value="ECO:0007669"/>
    <property type="project" value="UniProtKB-UniRule"/>
</dbReference>
<dbReference type="CDD" id="cd00473">
    <property type="entry name" value="bS6"/>
    <property type="match status" value="1"/>
</dbReference>
<dbReference type="Gene3D" id="3.30.70.60">
    <property type="match status" value="1"/>
</dbReference>
<dbReference type="HAMAP" id="MF_00360">
    <property type="entry name" value="Ribosomal_bS6"/>
    <property type="match status" value="1"/>
</dbReference>
<dbReference type="InterPro" id="IPR000529">
    <property type="entry name" value="Ribosomal_bS6"/>
</dbReference>
<dbReference type="InterPro" id="IPR035980">
    <property type="entry name" value="Ribosomal_bS6_sf"/>
</dbReference>
<dbReference type="InterPro" id="IPR020814">
    <property type="entry name" value="Ribosomal_S6_plastid/chlpt"/>
</dbReference>
<dbReference type="InterPro" id="IPR014717">
    <property type="entry name" value="Transl_elong_EF1B/ribsomal_bS6"/>
</dbReference>
<dbReference type="NCBIfam" id="TIGR00166">
    <property type="entry name" value="S6"/>
    <property type="match status" value="1"/>
</dbReference>
<dbReference type="PANTHER" id="PTHR21011">
    <property type="entry name" value="MITOCHONDRIAL 28S RIBOSOMAL PROTEIN S6"/>
    <property type="match status" value="1"/>
</dbReference>
<dbReference type="PANTHER" id="PTHR21011:SF1">
    <property type="entry name" value="SMALL RIBOSOMAL SUBUNIT PROTEIN BS6M"/>
    <property type="match status" value="1"/>
</dbReference>
<dbReference type="Pfam" id="PF01250">
    <property type="entry name" value="Ribosomal_S6"/>
    <property type="match status" value="1"/>
</dbReference>
<dbReference type="SUPFAM" id="SSF54995">
    <property type="entry name" value="Ribosomal protein S6"/>
    <property type="match status" value="1"/>
</dbReference>
<comment type="function">
    <text evidence="1">Binds together with bS18 to 16S ribosomal RNA.</text>
</comment>
<comment type="similarity">
    <text evidence="1">Belongs to the bacterial ribosomal protein bS6 family.</text>
</comment>